<comment type="function">
    <text evidence="1">NDH shuttles electrons from NAD(P)H:plastoquinone, via FMN and iron-sulfur (Fe-S) centers, to quinones in the photosynthetic chain and possibly in a chloroplast respiratory chain. The immediate electron acceptor for the enzyme in this species is believed to be plastoquinone. Couples the redox reaction to proton translocation, and thus conserves the redox energy in a proton gradient.</text>
</comment>
<comment type="catalytic activity">
    <reaction evidence="1">
        <text>a plastoquinone + NADH + (n+1) H(+)(in) = a plastoquinol + NAD(+) + n H(+)(out)</text>
        <dbReference type="Rhea" id="RHEA:42608"/>
        <dbReference type="Rhea" id="RHEA-COMP:9561"/>
        <dbReference type="Rhea" id="RHEA-COMP:9562"/>
        <dbReference type="ChEBI" id="CHEBI:15378"/>
        <dbReference type="ChEBI" id="CHEBI:17757"/>
        <dbReference type="ChEBI" id="CHEBI:57540"/>
        <dbReference type="ChEBI" id="CHEBI:57945"/>
        <dbReference type="ChEBI" id="CHEBI:62192"/>
    </reaction>
</comment>
<comment type="catalytic activity">
    <reaction evidence="1">
        <text>a plastoquinone + NADPH + (n+1) H(+)(in) = a plastoquinol + NADP(+) + n H(+)(out)</text>
        <dbReference type="Rhea" id="RHEA:42612"/>
        <dbReference type="Rhea" id="RHEA-COMP:9561"/>
        <dbReference type="Rhea" id="RHEA-COMP:9562"/>
        <dbReference type="ChEBI" id="CHEBI:15378"/>
        <dbReference type="ChEBI" id="CHEBI:17757"/>
        <dbReference type="ChEBI" id="CHEBI:57783"/>
        <dbReference type="ChEBI" id="CHEBI:58349"/>
        <dbReference type="ChEBI" id="CHEBI:62192"/>
    </reaction>
</comment>
<comment type="subunit">
    <text evidence="1">NDH is composed of at least 16 different subunits, 5 of which are encoded in the nucleus.</text>
</comment>
<comment type="subcellular location">
    <subcellularLocation>
        <location evidence="1">Plastid</location>
        <location evidence="1">Chloroplast thylakoid membrane</location>
        <topology evidence="1">Multi-pass membrane protein</topology>
    </subcellularLocation>
</comment>
<comment type="similarity">
    <text evidence="1">Belongs to the complex I subunit 4L family.</text>
</comment>
<organism>
    <name type="scientific">Aethionema grandiflorum</name>
    <name type="common">Persian stone-cress</name>
    <dbReference type="NCBI Taxonomy" id="72657"/>
    <lineage>
        <taxon>Eukaryota</taxon>
        <taxon>Viridiplantae</taxon>
        <taxon>Streptophyta</taxon>
        <taxon>Embryophyta</taxon>
        <taxon>Tracheophyta</taxon>
        <taxon>Spermatophyta</taxon>
        <taxon>Magnoliopsida</taxon>
        <taxon>eudicotyledons</taxon>
        <taxon>Gunneridae</taxon>
        <taxon>Pentapetalae</taxon>
        <taxon>rosids</taxon>
        <taxon>malvids</taxon>
        <taxon>Brassicales</taxon>
        <taxon>Brassicaceae</taxon>
        <taxon>Aethionemeae</taxon>
        <taxon>Aethionema</taxon>
    </lineage>
</organism>
<keyword id="KW-0150">Chloroplast</keyword>
<keyword id="KW-0472">Membrane</keyword>
<keyword id="KW-0520">NAD</keyword>
<keyword id="KW-0521">NADP</keyword>
<keyword id="KW-0934">Plastid</keyword>
<keyword id="KW-0618">Plastoquinone</keyword>
<keyword id="KW-0874">Quinone</keyword>
<keyword id="KW-0793">Thylakoid</keyword>
<keyword id="KW-1278">Translocase</keyword>
<keyword id="KW-0812">Transmembrane</keyword>
<keyword id="KW-1133">Transmembrane helix</keyword>
<keyword id="KW-0813">Transport</keyword>
<dbReference type="EC" id="7.1.1.-" evidence="1"/>
<dbReference type="EMBL" id="AP009367">
    <property type="protein sequence ID" value="BAF49907.1"/>
    <property type="molecule type" value="Genomic_DNA"/>
</dbReference>
<dbReference type="RefSeq" id="YP_001123082.1">
    <property type="nucleotide sequence ID" value="NC_009266.1"/>
</dbReference>
<dbReference type="SMR" id="A4QJQ2"/>
<dbReference type="GeneID" id="4962306"/>
<dbReference type="GO" id="GO:0009535">
    <property type="term" value="C:chloroplast thylakoid membrane"/>
    <property type="evidence" value="ECO:0007669"/>
    <property type="project" value="UniProtKB-SubCell"/>
</dbReference>
<dbReference type="GO" id="GO:0030964">
    <property type="term" value="C:NADH dehydrogenase complex"/>
    <property type="evidence" value="ECO:0007669"/>
    <property type="project" value="TreeGrafter"/>
</dbReference>
<dbReference type="GO" id="GO:0016655">
    <property type="term" value="F:oxidoreductase activity, acting on NAD(P)H, quinone or similar compound as acceptor"/>
    <property type="evidence" value="ECO:0007669"/>
    <property type="project" value="UniProtKB-UniRule"/>
</dbReference>
<dbReference type="GO" id="GO:0048038">
    <property type="term" value="F:quinone binding"/>
    <property type="evidence" value="ECO:0007669"/>
    <property type="project" value="UniProtKB-KW"/>
</dbReference>
<dbReference type="GO" id="GO:0042773">
    <property type="term" value="P:ATP synthesis coupled electron transport"/>
    <property type="evidence" value="ECO:0007669"/>
    <property type="project" value="InterPro"/>
</dbReference>
<dbReference type="GO" id="GO:0019684">
    <property type="term" value="P:photosynthesis, light reaction"/>
    <property type="evidence" value="ECO:0007669"/>
    <property type="project" value="UniProtKB-UniRule"/>
</dbReference>
<dbReference type="FunFam" id="1.10.287.3510:FF:000001">
    <property type="entry name" value="NADH-quinone oxidoreductase subunit K"/>
    <property type="match status" value="1"/>
</dbReference>
<dbReference type="Gene3D" id="1.10.287.3510">
    <property type="match status" value="1"/>
</dbReference>
<dbReference type="HAMAP" id="MF_01456">
    <property type="entry name" value="NDH1_NuoK"/>
    <property type="match status" value="1"/>
</dbReference>
<dbReference type="InterPro" id="IPR001133">
    <property type="entry name" value="NADH_UbQ_OxRdtase_chain4L/K"/>
</dbReference>
<dbReference type="InterPro" id="IPR039428">
    <property type="entry name" value="NUOK/Mnh_C1-like"/>
</dbReference>
<dbReference type="NCBIfam" id="NF004320">
    <property type="entry name" value="PRK05715.1-2"/>
    <property type="match status" value="1"/>
</dbReference>
<dbReference type="NCBIfam" id="NF004322">
    <property type="entry name" value="PRK05715.1-4"/>
    <property type="match status" value="1"/>
</dbReference>
<dbReference type="PANTHER" id="PTHR11434:SF16">
    <property type="entry name" value="NADH-UBIQUINONE OXIDOREDUCTASE CHAIN 4L"/>
    <property type="match status" value="1"/>
</dbReference>
<dbReference type="PANTHER" id="PTHR11434">
    <property type="entry name" value="NADH-UBIQUINONE OXIDOREDUCTASE SUBUNIT ND4L"/>
    <property type="match status" value="1"/>
</dbReference>
<dbReference type="Pfam" id="PF00420">
    <property type="entry name" value="Oxidored_q2"/>
    <property type="match status" value="1"/>
</dbReference>
<evidence type="ECO:0000255" key="1">
    <source>
        <dbReference type="HAMAP-Rule" id="MF_01456"/>
    </source>
</evidence>
<proteinExistence type="inferred from homology"/>
<gene>
    <name evidence="1" type="primary">ndhE</name>
</gene>
<reference key="1">
    <citation type="submission" date="2007-03" db="EMBL/GenBank/DDBJ databases">
        <title>Sequencing analysis of Aethionema grandiflorum chloroplast DNA.</title>
        <authorList>
            <person name="Hosouchi T."/>
            <person name="Tsuruoka H."/>
            <person name="Kotani H."/>
        </authorList>
    </citation>
    <scope>NUCLEOTIDE SEQUENCE [LARGE SCALE GENOMIC DNA]</scope>
</reference>
<geneLocation type="chloroplast"/>
<feature type="chain" id="PRO_0000360301" description="NAD(P)H-quinone oxidoreductase subunit 4L, chloroplastic">
    <location>
        <begin position="1"/>
        <end position="101"/>
    </location>
</feature>
<feature type="transmembrane region" description="Helical" evidence="1">
    <location>
        <begin position="2"/>
        <end position="22"/>
    </location>
</feature>
<feature type="transmembrane region" description="Helical" evidence="1">
    <location>
        <begin position="32"/>
        <end position="52"/>
    </location>
</feature>
<feature type="transmembrane region" description="Helical" evidence="1">
    <location>
        <begin position="61"/>
        <end position="81"/>
    </location>
</feature>
<accession>A4QJQ2</accession>
<protein>
    <recommendedName>
        <fullName evidence="1">NAD(P)H-quinone oxidoreductase subunit 4L, chloroplastic</fullName>
        <ecNumber evidence="1">7.1.1.-</ecNumber>
    </recommendedName>
    <alternativeName>
        <fullName evidence="1">NAD(P)H dehydrogenase subunit 4L</fullName>
    </alternativeName>
    <alternativeName>
        <fullName evidence="1">NADH-plastoquinone oxidoreductase subunit 4L</fullName>
    </alternativeName>
</protein>
<sequence>MILEHVLVLSAYLFFIGLYGLITSRNMVRALMCLELILNAVNMNFVTFSDFFDNSQLKGDIFCIFVIAIAAAEAAIGLAIVSSIYRNRKSTRINQSTLLNK</sequence>
<name>NU4LC_AETGR</name>